<keyword id="KW-0001">2Fe-2S</keyword>
<keyword id="KW-0150">Chloroplast</keyword>
<keyword id="KW-0903">Direct protein sequencing</keyword>
<keyword id="KW-0249">Electron transport</keyword>
<keyword id="KW-0408">Iron</keyword>
<keyword id="KW-0411">Iron-sulfur</keyword>
<keyword id="KW-0479">Metal-binding</keyword>
<keyword id="KW-0934">Plastid</keyword>
<keyword id="KW-0813">Transport</keyword>
<dbReference type="SMR" id="P83525"/>
<dbReference type="GO" id="GO:0009507">
    <property type="term" value="C:chloroplast"/>
    <property type="evidence" value="ECO:0000304"/>
    <property type="project" value="UniProtKB"/>
</dbReference>
<dbReference type="GO" id="GO:0009570">
    <property type="term" value="C:chloroplast stroma"/>
    <property type="evidence" value="ECO:0007669"/>
    <property type="project" value="TreeGrafter"/>
</dbReference>
<dbReference type="GO" id="GO:0051537">
    <property type="term" value="F:2 iron, 2 sulfur cluster binding"/>
    <property type="evidence" value="ECO:0007669"/>
    <property type="project" value="UniProtKB-KW"/>
</dbReference>
<dbReference type="GO" id="GO:0009055">
    <property type="term" value="F:electron transfer activity"/>
    <property type="evidence" value="ECO:0000304"/>
    <property type="project" value="UniProtKB"/>
</dbReference>
<dbReference type="GO" id="GO:0008198">
    <property type="term" value="F:ferrous iron binding"/>
    <property type="evidence" value="ECO:0000304"/>
    <property type="project" value="UniProtKB"/>
</dbReference>
<dbReference type="GO" id="GO:0022900">
    <property type="term" value="P:electron transport chain"/>
    <property type="evidence" value="ECO:0007669"/>
    <property type="project" value="InterPro"/>
</dbReference>
<dbReference type="GO" id="GO:0006124">
    <property type="term" value="P:ferredoxin metabolic process"/>
    <property type="evidence" value="ECO:0000304"/>
    <property type="project" value="UniProtKB"/>
</dbReference>
<dbReference type="CDD" id="cd00207">
    <property type="entry name" value="fer2"/>
    <property type="match status" value="1"/>
</dbReference>
<dbReference type="FunFam" id="3.10.20.30:FF:000014">
    <property type="entry name" value="Ferredoxin"/>
    <property type="match status" value="1"/>
</dbReference>
<dbReference type="Gene3D" id="3.10.20.30">
    <property type="match status" value="1"/>
</dbReference>
<dbReference type="InterPro" id="IPR036010">
    <property type="entry name" value="2Fe-2S_ferredoxin-like_sf"/>
</dbReference>
<dbReference type="InterPro" id="IPR001041">
    <property type="entry name" value="2Fe-2S_ferredoxin-type"/>
</dbReference>
<dbReference type="InterPro" id="IPR006058">
    <property type="entry name" value="2Fe2S_fd_BS"/>
</dbReference>
<dbReference type="InterPro" id="IPR012675">
    <property type="entry name" value="Beta-grasp_dom_sf"/>
</dbReference>
<dbReference type="InterPro" id="IPR010241">
    <property type="entry name" value="Fd_pln"/>
</dbReference>
<dbReference type="NCBIfam" id="TIGR02008">
    <property type="entry name" value="fdx_plant"/>
    <property type="match status" value="1"/>
</dbReference>
<dbReference type="PANTHER" id="PTHR43112">
    <property type="entry name" value="FERREDOXIN"/>
    <property type="match status" value="1"/>
</dbReference>
<dbReference type="PANTHER" id="PTHR43112:SF3">
    <property type="entry name" value="FERREDOXIN-2, CHLOROPLASTIC"/>
    <property type="match status" value="1"/>
</dbReference>
<dbReference type="Pfam" id="PF00111">
    <property type="entry name" value="Fer2"/>
    <property type="match status" value="1"/>
</dbReference>
<dbReference type="SUPFAM" id="SSF54292">
    <property type="entry name" value="2Fe-2S ferredoxin-like"/>
    <property type="match status" value="1"/>
</dbReference>
<dbReference type="PROSITE" id="PS00197">
    <property type="entry name" value="2FE2S_FER_1"/>
    <property type="match status" value="1"/>
</dbReference>
<dbReference type="PROSITE" id="PS51085">
    <property type="entry name" value="2FE2S_FER_2"/>
    <property type="match status" value="1"/>
</dbReference>
<reference evidence="3" key="1">
    <citation type="journal article" date="2002" name="Biol. Pharm. Bull.">
        <title>Amino acid sequences of ferredoxins from Scopolia japonica and Lycium chinense: their similarities to that of Datura arborea.</title>
        <authorList>
            <person name="Mino Y."/>
        </authorList>
    </citation>
    <scope>PROTEIN SEQUENCE</scope>
    <scope>FUNCTION</scope>
    <scope>COFACTOR</scope>
    <scope>SUBCELLULAR LOCATION</scope>
    <source>
        <tissue>Leaf</tissue>
    </source>
</reference>
<protein>
    <recommendedName>
        <fullName>Ferredoxin</fullName>
    </recommendedName>
</protein>
<name>FER_SCOJA</name>
<feature type="chain" id="PRO_0000189364" description="Ferredoxin">
    <location>
        <begin position="1"/>
        <end position="97"/>
    </location>
</feature>
<feature type="domain" description="2Fe-2S ferredoxin-type" evidence="1">
    <location>
        <begin position="3"/>
        <end position="93"/>
    </location>
</feature>
<feature type="binding site" evidence="1">
    <location>
        <position position="39"/>
    </location>
    <ligand>
        <name>[2Fe-2S] cluster</name>
        <dbReference type="ChEBI" id="CHEBI:190135"/>
    </ligand>
</feature>
<feature type="binding site" evidence="1">
    <location>
        <position position="44"/>
    </location>
    <ligand>
        <name>[2Fe-2S] cluster</name>
        <dbReference type="ChEBI" id="CHEBI:190135"/>
    </ligand>
</feature>
<feature type="binding site" evidence="1">
    <location>
        <position position="47"/>
    </location>
    <ligand>
        <name>[2Fe-2S] cluster</name>
        <dbReference type="ChEBI" id="CHEBI:190135"/>
    </ligand>
</feature>
<feature type="binding site" evidence="1">
    <location>
        <position position="77"/>
    </location>
    <ligand>
        <name>[2Fe-2S] cluster</name>
        <dbReference type="ChEBI" id="CHEBI:190135"/>
    </ligand>
</feature>
<comment type="function">
    <text evidence="2">Ferredoxins are iron-sulfur proteins that transfer electrons in a wide variety of metabolic reactions.</text>
</comment>
<comment type="cofactor">
    <cofactor evidence="2">
        <name>[2Fe-2S] cluster</name>
        <dbReference type="ChEBI" id="CHEBI:190135"/>
    </cofactor>
    <text evidence="2">Binds 1 [2Fe-2S] cluster.</text>
</comment>
<comment type="subcellular location">
    <subcellularLocation>
        <location evidence="2">Plastid</location>
        <location evidence="2">Chloroplast</location>
    </subcellularLocation>
</comment>
<comment type="similarity">
    <text evidence="3">Belongs to the 2Fe2S plant-type ferredoxin family.</text>
</comment>
<organism evidence="3">
    <name type="scientific">Scopolia japonica</name>
    <name type="common">Japanese belladonna</name>
    <dbReference type="NCBI Taxonomy" id="221162"/>
    <lineage>
        <taxon>Eukaryota</taxon>
        <taxon>Viridiplantae</taxon>
        <taxon>Streptophyta</taxon>
        <taxon>Embryophyta</taxon>
        <taxon>Tracheophyta</taxon>
        <taxon>Spermatophyta</taxon>
        <taxon>Magnoliopsida</taxon>
        <taxon>eudicotyledons</taxon>
        <taxon>Gunneridae</taxon>
        <taxon>Pentapetalae</taxon>
        <taxon>asterids</taxon>
        <taxon>lamiids</taxon>
        <taxon>Solanales</taxon>
        <taxon>Solanaceae</taxon>
        <taxon>Solanoideae</taxon>
        <taxon>Hyoscyameae</taxon>
        <taxon>Scopolia</taxon>
    </lineage>
</organism>
<sequence>ATYKVKLVTPDGPVEFDCPDDVYILDQAEEEGHELPYSCRAGSCSSCAGKVSAGTVDQSDGNFLDDDQMADGFVLTCVAYPQSDVIIETHKEEELTG</sequence>
<evidence type="ECO:0000255" key="1">
    <source>
        <dbReference type="PROSITE-ProRule" id="PRU00465"/>
    </source>
</evidence>
<evidence type="ECO:0000269" key="2">
    <source>
    </source>
</evidence>
<evidence type="ECO:0000305" key="3"/>
<proteinExistence type="evidence at protein level"/>
<accession>P83525</accession>